<evidence type="ECO:0000255" key="1">
    <source>
        <dbReference type="HAMAP-Rule" id="MF_00429"/>
    </source>
</evidence>
<organism>
    <name type="scientific">Azotobacter vinelandii (strain DJ / ATCC BAA-1303)</name>
    <dbReference type="NCBI Taxonomy" id="322710"/>
    <lineage>
        <taxon>Bacteria</taxon>
        <taxon>Pseudomonadati</taxon>
        <taxon>Pseudomonadota</taxon>
        <taxon>Gammaproteobacteria</taxon>
        <taxon>Pseudomonadales</taxon>
        <taxon>Pseudomonadaceae</taxon>
        <taxon>Azotobacter</taxon>
    </lineage>
</organism>
<gene>
    <name evidence="1" type="primary">nqrE</name>
    <name type="ordered locus">Avin_14630</name>
</gene>
<reference key="1">
    <citation type="journal article" date="2009" name="J. Bacteriol.">
        <title>Genome sequence of Azotobacter vinelandii, an obligate aerobe specialized to support diverse anaerobic metabolic processes.</title>
        <authorList>
            <person name="Setubal J.C."/>
            <person name="Dos Santos P."/>
            <person name="Goldman B.S."/>
            <person name="Ertesvaag H."/>
            <person name="Espin G."/>
            <person name="Rubio L.M."/>
            <person name="Valla S."/>
            <person name="Almeida N.F."/>
            <person name="Balasubramanian D."/>
            <person name="Cromes L."/>
            <person name="Curatti L."/>
            <person name="Du Z."/>
            <person name="Godsy E."/>
            <person name="Goodner B."/>
            <person name="Hellner-Burris K."/>
            <person name="Hernandez J.A."/>
            <person name="Houmiel K."/>
            <person name="Imperial J."/>
            <person name="Kennedy C."/>
            <person name="Larson T.J."/>
            <person name="Latreille P."/>
            <person name="Ligon L.S."/>
            <person name="Lu J."/>
            <person name="Maerk M."/>
            <person name="Miller N.M."/>
            <person name="Norton S."/>
            <person name="O'Carroll I.P."/>
            <person name="Paulsen I."/>
            <person name="Raulfs E.C."/>
            <person name="Roemer R."/>
            <person name="Rosser J."/>
            <person name="Segura D."/>
            <person name="Slater S."/>
            <person name="Stricklin S.L."/>
            <person name="Studholme D.J."/>
            <person name="Sun J."/>
            <person name="Viana C.J."/>
            <person name="Wallin E."/>
            <person name="Wang B."/>
            <person name="Wheeler C."/>
            <person name="Zhu H."/>
            <person name="Dean D.R."/>
            <person name="Dixon R."/>
            <person name="Wood D."/>
        </authorList>
    </citation>
    <scope>NUCLEOTIDE SEQUENCE [LARGE SCALE GENOMIC DNA]</scope>
    <source>
        <strain>DJ / ATCC BAA-1303</strain>
    </source>
</reference>
<sequence length="202" mass="21827">MEHYISLFVKSVFIENMALAFFLGMCTFIAISKKVETAIGLGIAVVVVQAITVPANNLLYAYLLKEGALAWAGLPDIDLSFLGFLSYIGVIAAIVQILEMLLDKYVPSLYNALGIYLPLITVNCAIMAGSLFMVERDYNFPESVVYGIGSGFSWALAIALLAGIREKLKYSDVPEGLQGLGIAFITIGLMSLGFMSFSGIQL</sequence>
<keyword id="KW-0997">Cell inner membrane</keyword>
<keyword id="KW-1003">Cell membrane</keyword>
<keyword id="KW-0406">Ion transport</keyword>
<keyword id="KW-0472">Membrane</keyword>
<keyword id="KW-0520">NAD</keyword>
<keyword id="KW-0915">Sodium</keyword>
<keyword id="KW-0739">Sodium transport</keyword>
<keyword id="KW-1278">Translocase</keyword>
<keyword id="KW-0812">Transmembrane</keyword>
<keyword id="KW-1133">Transmembrane helix</keyword>
<keyword id="KW-0813">Transport</keyword>
<keyword id="KW-0830">Ubiquinone</keyword>
<accession>C1DR06</accession>
<proteinExistence type="inferred from homology"/>
<protein>
    <recommendedName>
        <fullName evidence="1">Na(+)-translocating NADH-quinone reductase subunit E</fullName>
        <shortName evidence="1">Na(+)-NQR subunit E</shortName>
        <shortName evidence="1">Na(+)-translocating NQR subunit E</shortName>
        <ecNumber evidence="1">7.2.1.1</ecNumber>
    </recommendedName>
    <alternativeName>
        <fullName evidence="1">NQR complex subunit E</fullName>
    </alternativeName>
    <alternativeName>
        <fullName evidence="1">NQR-1 subunit E</fullName>
    </alternativeName>
</protein>
<dbReference type="EC" id="7.2.1.1" evidence="1"/>
<dbReference type="EMBL" id="CP001157">
    <property type="protein sequence ID" value="ACO77679.1"/>
    <property type="molecule type" value="Genomic_DNA"/>
</dbReference>
<dbReference type="RefSeq" id="WP_012700098.1">
    <property type="nucleotide sequence ID" value="NC_012560.1"/>
</dbReference>
<dbReference type="SMR" id="C1DR06"/>
<dbReference type="STRING" id="322710.Avin_14630"/>
<dbReference type="EnsemblBacteria" id="ACO77679">
    <property type="protein sequence ID" value="ACO77679"/>
    <property type="gene ID" value="Avin_14630"/>
</dbReference>
<dbReference type="GeneID" id="88184762"/>
<dbReference type="KEGG" id="avn:Avin_14630"/>
<dbReference type="eggNOG" id="COG2209">
    <property type="taxonomic scope" value="Bacteria"/>
</dbReference>
<dbReference type="HOGENOM" id="CLU_095255_0_0_6"/>
<dbReference type="OrthoDB" id="9803631at2"/>
<dbReference type="Proteomes" id="UP000002424">
    <property type="component" value="Chromosome"/>
</dbReference>
<dbReference type="GO" id="GO:0009276">
    <property type="term" value="C:Gram-negative-bacterium-type cell wall"/>
    <property type="evidence" value="ECO:0007669"/>
    <property type="project" value="InterPro"/>
</dbReference>
<dbReference type="GO" id="GO:0005886">
    <property type="term" value="C:plasma membrane"/>
    <property type="evidence" value="ECO:0007669"/>
    <property type="project" value="UniProtKB-SubCell"/>
</dbReference>
<dbReference type="GO" id="GO:0016655">
    <property type="term" value="F:oxidoreductase activity, acting on NAD(P)H, quinone or similar compound as acceptor"/>
    <property type="evidence" value="ECO:0007669"/>
    <property type="project" value="UniProtKB-UniRule"/>
</dbReference>
<dbReference type="GO" id="GO:0022904">
    <property type="term" value="P:respiratory electron transport chain"/>
    <property type="evidence" value="ECO:0007669"/>
    <property type="project" value="InterPro"/>
</dbReference>
<dbReference type="GO" id="GO:0006814">
    <property type="term" value="P:sodium ion transport"/>
    <property type="evidence" value="ECO:0007669"/>
    <property type="project" value="UniProtKB-UniRule"/>
</dbReference>
<dbReference type="HAMAP" id="MF_00429">
    <property type="entry name" value="NqrE"/>
    <property type="match status" value="1"/>
</dbReference>
<dbReference type="InterPro" id="IPR003667">
    <property type="entry name" value="NqrDE/RnfAE"/>
</dbReference>
<dbReference type="InterPro" id="IPR050133">
    <property type="entry name" value="NqrDE/RnfAE_oxidrdctase"/>
</dbReference>
<dbReference type="InterPro" id="IPR010967">
    <property type="entry name" value="NqrE"/>
</dbReference>
<dbReference type="NCBIfam" id="TIGR01940">
    <property type="entry name" value="nqrE"/>
    <property type="match status" value="1"/>
</dbReference>
<dbReference type="PANTHER" id="PTHR30335">
    <property type="entry name" value="INTEGRAL MEMBRANE PROTEIN OF SOXR-REDUCING COMPLEX"/>
    <property type="match status" value="1"/>
</dbReference>
<dbReference type="PANTHER" id="PTHR30335:SF1">
    <property type="entry name" value="NA(+)-TRANSLOCATING NADH-QUINONE REDUCTASE SUBUNIT E"/>
    <property type="match status" value="1"/>
</dbReference>
<dbReference type="Pfam" id="PF02508">
    <property type="entry name" value="Rnf-Nqr"/>
    <property type="match status" value="1"/>
</dbReference>
<dbReference type="PIRSF" id="PIRSF006102">
    <property type="entry name" value="NQR_DE"/>
    <property type="match status" value="1"/>
</dbReference>
<name>NQRE_AZOVD</name>
<feature type="chain" id="PRO_1000206065" description="Na(+)-translocating NADH-quinone reductase subunit E">
    <location>
        <begin position="1"/>
        <end position="202"/>
    </location>
</feature>
<feature type="transmembrane region" description="Helical" evidence="1">
    <location>
        <begin position="11"/>
        <end position="31"/>
    </location>
</feature>
<feature type="transmembrane region" description="Helical" evidence="1">
    <location>
        <begin position="35"/>
        <end position="55"/>
    </location>
</feature>
<feature type="transmembrane region" description="Helical" evidence="1">
    <location>
        <begin position="81"/>
        <end position="101"/>
    </location>
</feature>
<feature type="transmembrane region" description="Helical" evidence="1">
    <location>
        <begin position="114"/>
        <end position="134"/>
    </location>
</feature>
<feature type="transmembrane region" description="Helical" evidence="1">
    <location>
        <begin position="144"/>
        <end position="164"/>
    </location>
</feature>
<feature type="transmembrane region" description="Helical" evidence="1">
    <location>
        <begin position="180"/>
        <end position="200"/>
    </location>
</feature>
<comment type="function">
    <text evidence="1">NQR complex catalyzes the reduction of ubiquinone-1 to ubiquinol by two successive reactions, coupled with the transport of Na(+) ions from the cytoplasm to the periplasm. NqrA to NqrE are probably involved in the second step, the conversion of ubisemiquinone to ubiquinol.</text>
</comment>
<comment type="catalytic activity">
    <reaction evidence="1">
        <text>a ubiquinone + n Na(+)(in) + NADH + H(+) = a ubiquinol + n Na(+)(out) + NAD(+)</text>
        <dbReference type="Rhea" id="RHEA:47748"/>
        <dbReference type="Rhea" id="RHEA-COMP:9565"/>
        <dbReference type="Rhea" id="RHEA-COMP:9566"/>
        <dbReference type="ChEBI" id="CHEBI:15378"/>
        <dbReference type="ChEBI" id="CHEBI:16389"/>
        <dbReference type="ChEBI" id="CHEBI:17976"/>
        <dbReference type="ChEBI" id="CHEBI:29101"/>
        <dbReference type="ChEBI" id="CHEBI:57540"/>
        <dbReference type="ChEBI" id="CHEBI:57945"/>
        <dbReference type="EC" id="7.2.1.1"/>
    </reaction>
</comment>
<comment type="subunit">
    <text evidence="1">Composed of six subunits; NqrA, NqrB, NqrC, NqrD, NqrE and NqrF.</text>
</comment>
<comment type="subcellular location">
    <subcellularLocation>
        <location evidence="1">Cell inner membrane</location>
        <topology evidence="1">Multi-pass membrane protein</topology>
    </subcellularLocation>
</comment>
<comment type="similarity">
    <text evidence="1">Belongs to the NqrDE/RnfAE family.</text>
</comment>